<evidence type="ECO:0000255" key="1">
    <source>
        <dbReference type="HAMAP-Rule" id="MF_00036"/>
    </source>
</evidence>
<evidence type="ECO:0000256" key="2">
    <source>
        <dbReference type="SAM" id="MobiDB-lite"/>
    </source>
</evidence>
<organism>
    <name type="scientific">Pediococcus pentosaceus (strain ATCC 25745 / CCUG 21536 / LMG 10740 / 183-1w)</name>
    <dbReference type="NCBI Taxonomy" id="278197"/>
    <lineage>
        <taxon>Bacteria</taxon>
        <taxon>Bacillati</taxon>
        <taxon>Bacillota</taxon>
        <taxon>Bacilli</taxon>
        <taxon>Lactobacillales</taxon>
        <taxon>Lactobacillaceae</taxon>
        <taxon>Pediococcus</taxon>
    </lineage>
</organism>
<name>SYA_PEDPA</name>
<proteinExistence type="inferred from homology"/>
<feature type="chain" id="PRO_0000347714" description="Alanine--tRNA ligase">
    <location>
        <begin position="1"/>
        <end position="881"/>
    </location>
</feature>
<feature type="region of interest" description="Disordered" evidence="2">
    <location>
        <begin position="422"/>
        <end position="445"/>
    </location>
</feature>
<feature type="compositionally biased region" description="Basic and acidic residues" evidence="2">
    <location>
        <begin position="422"/>
        <end position="440"/>
    </location>
</feature>
<feature type="binding site" evidence="1">
    <location>
        <position position="567"/>
    </location>
    <ligand>
        <name>Zn(2+)</name>
        <dbReference type="ChEBI" id="CHEBI:29105"/>
    </ligand>
</feature>
<feature type="binding site" evidence="1">
    <location>
        <position position="571"/>
    </location>
    <ligand>
        <name>Zn(2+)</name>
        <dbReference type="ChEBI" id="CHEBI:29105"/>
    </ligand>
</feature>
<feature type="binding site" evidence="1">
    <location>
        <position position="669"/>
    </location>
    <ligand>
        <name>Zn(2+)</name>
        <dbReference type="ChEBI" id="CHEBI:29105"/>
    </ligand>
</feature>
<feature type="binding site" evidence="1">
    <location>
        <position position="673"/>
    </location>
    <ligand>
        <name>Zn(2+)</name>
        <dbReference type="ChEBI" id="CHEBI:29105"/>
    </ligand>
</feature>
<gene>
    <name evidence="1" type="primary">alaS</name>
    <name type="ordered locus">PEPE_1263</name>
</gene>
<dbReference type="EC" id="6.1.1.7" evidence="1"/>
<dbReference type="EMBL" id="CP000422">
    <property type="protein sequence ID" value="ABJ68304.1"/>
    <property type="molecule type" value="Genomic_DNA"/>
</dbReference>
<dbReference type="RefSeq" id="WP_011673577.1">
    <property type="nucleotide sequence ID" value="NC_008525.1"/>
</dbReference>
<dbReference type="SMR" id="Q03ER8"/>
<dbReference type="STRING" id="278197.PEPE_1263"/>
<dbReference type="GeneID" id="33061752"/>
<dbReference type="KEGG" id="ppe:PEPE_1263"/>
<dbReference type="eggNOG" id="COG0013">
    <property type="taxonomic scope" value="Bacteria"/>
</dbReference>
<dbReference type="HOGENOM" id="CLU_004485_1_1_9"/>
<dbReference type="OrthoDB" id="9803884at2"/>
<dbReference type="Proteomes" id="UP000000773">
    <property type="component" value="Chromosome"/>
</dbReference>
<dbReference type="GO" id="GO:0005829">
    <property type="term" value="C:cytosol"/>
    <property type="evidence" value="ECO:0007669"/>
    <property type="project" value="TreeGrafter"/>
</dbReference>
<dbReference type="GO" id="GO:0004813">
    <property type="term" value="F:alanine-tRNA ligase activity"/>
    <property type="evidence" value="ECO:0007669"/>
    <property type="project" value="UniProtKB-UniRule"/>
</dbReference>
<dbReference type="GO" id="GO:0002161">
    <property type="term" value="F:aminoacyl-tRNA deacylase activity"/>
    <property type="evidence" value="ECO:0007669"/>
    <property type="project" value="TreeGrafter"/>
</dbReference>
<dbReference type="GO" id="GO:0005524">
    <property type="term" value="F:ATP binding"/>
    <property type="evidence" value="ECO:0007669"/>
    <property type="project" value="UniProtKB-UniRule"/>
</dbReference>
<dbReference type="GO" id="GO:0140096">
    <property type="term" value="F:catalytic activity, acting on a protein"/>
    <property type="evidence" value="ECO:0007669"/>
    <property type="project" value="UniProtKB-ARBA"/>
</dbReference>
<dbReference type="GO" id="GO:0016740">
    <property type="term" value="F:transferase activity"/>
    <property type="evidence" value="ECO:0007669"/>
    <property type="project" value="UniProtKB-ARBA"/>
</dbReference>
<dbReference type="GO" id="GO:0000049">
    <property type="term" value="F:tRNA binding"/>
    <property type="evidence" value="ECO:0007669"/>
    <property type="project" value="UniProtKB-KW"/>
</dbReference>
<dbReference type="GO" id="GO:0008270">
    <property type="term" value="F:zinc ion binding"/>
    <property type="evidence" value="ECO:0007669"/>
    <property type="project" value="UniProtKB-UniRule"/>
</dbReference>
<dbReference type="GO" id="GO:0006419">
    <property type="term" value="P:alanyl-tRNA aminoacylation"/>
    <property type="evidence" value="ECO:0007669"/>
    <property type="project" value="UniProtKB-UniRule"/>
</dbReference>
<dbReference type="CDD" id="cd00673">
    <property type="entry name" value="AlaRS_core"/>
    <property type="match status" value="1"/>
</dbReference>
<dbReference type="FunFam" id="3.10.310.40:FF:000001">
    <property type="entry name" value="Alanine--tRNA ligase"/>
    <property type="match status" value="1"/>
</dbReference>
<dbReference type="FunFam" id="3.30.54.20:FF:000001">
    <property type="entry name" value="Alanine--tRNA ligase"/>
    <property type="match status" value="1"/>
</dbReference>
<dbReference type="FunFam" id="3.30.930.10:FF:000046">
    <property type="entry name" value="Alanine--tRNA ligase"/>
    <property type="match status" value="1"/>
</dbReference>
<dbReference type="FunFam" id="3.30.980.10:FF:000004">
    <property type="entry name" value="Alanine--tRNA ligase, cytoplasmic"/>
    <property type="match status" value="1"/>
</dbReference>
<dbReference type="Gene3D" id="2.40.30.130">
    <property type="match status" value="1"/>
</dbReference>
<dbReference type="Gene3D" id="3.10.310.40">
    <property type="match status" value="1"/>
</dbReference>
<dbReference type="Gene3D" id="3.30.54.20">
    <property type="match status" value="1"/>
</dbReference>
<dbReference type="Gene3D" id="6.10.250.550">
    <property type="match status" value="1"/>
</dbReference>
<dbReference type="Gene3D" id="3.30.930.10">
    <property type="entry name" value="Bira Bifunctional Protein, Domain 2"/>
    <property type="match status" value="1"/>
</dbReference>
<dbReference type="Gene3D" id="3.30.980.10">
    <property type="entry name" value="Threonyl-trna Synthetase, Chain A, domain 2"/>
    <property type="match status" value="1"/>
</dbReference>
<dbReference type="HAMAP" id="MF_00036_B">
    <property type="entry name" value="Ala_tRNA_synth_B"/>
    <property type="match status" value="1"/>
</dbReference>
<dbReference type="InterPro" id="IPR045864">
    <property type="entry name" value="aa-tRNA-synth_II/BPL/LPL"/>
</dbReference>
<dbReference type="InterPro" id="IPR002318">
    <property type="entry name" value="Ala-tRNA-lgiase_IIc"/>
</dbReference>
<dbReference type="InterPro" id="IPR018162">
    <property type="entry name" value="Ala-tRNA-ligase_IIc_anticod-bd"/>
</dbReference>
<dbReference type="InterPro" id="IPR018165">
    <property type="entry name" value="Ala-tRNA-synth_IIc_core"/>
</dbReference>
<dbReference type="InterPro" id="IPR018164">
    <property type="entry name" value="Ala-tRNA-synth_IIc_N"/>
</dbReference>
<dbReference type="InterPro" id="IPR050058">
    <property type="entry name" value="Ala-tRNA_ligase"/>
</dbReference>
<dbReference type="InterPro" id="IPR023033">
    <property type="entry name" value="Ala_tRNA_ligase_euk/bac"/>
</dbReference>
<dbReference type="InterPro" id="IPR003156">
    <property type="entry name" value="DHHA1_dom"/>
</dbReference>
<dbReference type="InterPro" id="IPR018163">
    <property type="entry name" value="Thr/Ala-tRNA-synth_IIc_edit"/>
</dbReference>
<dbReference type="InterPro" id="IPR009000">
    <property type="entry name" value="Transl_B-barrel_sf"/>
</dbReference>
<dbReference type="InterPro" id="IPR012947">
    <property type="entry name" value="tRNA_SAD"/>
</dbReference>
<dbReference type="NCBIfam" id="TIGR00344">
    <property type="entry name" value="alaS"/>
    <property type="match status" value="1"/>
</dbReference>
<dbReference type="PANTHER" id="PTHR11777:SF9">
    <property type="entry name" value="ALANINE--TRNA LIGASE, CYTOPLASMIC"/>
    <property type="match status" value="1"/>
</dbReference>
<dbReference type="PANTHER" id="PTHR11777">
    <property type="entry name" value="ALANYL-TRNA SYNTHETASE"/>
    <property type="match status" value="1"/>
</dbReference>
<dbReference type="Pfam" id="PF02272">
    <property type="entry name" value="DHHA1"/>
    <property type="match status" value="1"/>
</dbReference>
<dbReference type="Pfam" id="PF01411">
    <property type="entry name" value="tRNA-synt_2c"/>
    <property type="match status" value="1"/>
</dbReference>
<dbReference type="Pfam" id="PF07973">
    <property type="entry name" value="tRNA_SAD"/>
    <property type="match status" value="1"/>
</dbReference>
<dbReference type="PRINTS" id="PR00980">
    <property type="entry name" value="TRNASYNTHALA"/>
</dbReference>
<dbReference type="SMART" id="SM00863">
    <property type="entry name" value="tRNA_SAD"/>
    <property type="match status" value="1"/>
</dbReference>
<dbReference type="SUPFAM" id="SSF55681">
    <property type="entry name" value="Class II aaRS and biotin synthetases"/>
    <property type="match status" value="1"/>
</dbReference>
<dbReference type="SUPFAM" id="SSF101353">
    <property type="entry name" value="Putative anticodon-binding domain of alanyl-tRNA synthetase (AlaRS)"/>
    <property type="match status" value="1"/>
</dbReference>
<dbReference type="SUPFAM" id="SSF55186">
    <property type="entry name" value="ThrRS/AlaRS common domain"/>
    <property type="match status" value="1"/>
</dbReference>
<dbReference type="SUPFAM" id="SSF50447">
    <property type="entry name" value="Translation proteins"/>
    <property type="match status" value="1"/>
</dbReference>
<dbReference type="PROSITE" id="PS50860">
    <property type="entry name" value="AA_TRNA_LIGASE_II_ALA"/>
    <property type="match status" value="1"/>
</dbReference>
<accession>Q03ER8</accession>
<keyword id="KW-0030">Aminoacyl-tRNA synthetase</keyword>
<keyword id="KW-0067">ATP-binding</keyword>
<keyword id="KW-0963">Cytoplasm</keyword>
<keyword id="KW-0436">Ligase</keyword>
<keyword id="KW-0479">Metal-binding</keyword>
<keyword id="KW-0547">Nucleotide-binding</keyword>
<keyword id="KW-0648">Protein biosynthesis</keyword>
<keyword id="KW-0694">RNA-binding</keyword>
<keyword id="KW-0820">tRNA-binding</keyword>
<keyword id="KW-0862">Zinc</keyword>
<comment type="function">
    <text evidence="1">Catalyzes the attachment of alanine to tRNA(Ala) in a two-step reaction: alanine is first activated by ATP to form Ala-AMP and then transferred to the acceptor end of tRNA(Ala). Also edits incorrectly charged Ser-tRNA(Ala) and Gly-tRNA(Ala) via its editing domain.</text>
</comment>
<comment type="catalytic activity">
    <reaction evidence="1">
        <text>tRNA(Ala) + L-alanine + ATP = L-alanyl-tRNA(Ala) + AMP + diphosphate</text>
        <dbReference type="Rhea" id="RHEA:12540"/>
        <dbReference type="Rhea" id="RHEA-COMP:9657"/>
        <dbReference type="Rhea" id="RHEA-COMP:9923"/>
        <dbReference type="ChEBI" id="CHEBI:30616"/>
        <dbReference type="ChEBI" id="CHEBI:33019"/>
        <dbReference type="ChEBI" id="CHEBI:57972"/>
        <dbReference type="ChEBI" id="CHEBI:78442"/>
        <dbReference type="ChEBI" id="CHEBI:78497"/>
        <dbReference type="ChEBI" id="CHEBI:456215"/>
        <dbReference type="EC" id="6.1.1.7"/>
    </reaction>
</comment>
<comment type="cofactor">
    <cofactor evidence="1">
        <name>Zn(2+)</name>
        <dbReference type="ChEBI" id="CHEBI:29105"/>
    </cofactor>
    <text evidence="1">Binds 1 zinc ion per subunit.</text>
</comment>
<comment type="subcellular location">
    <subcellularLocation>
        <location evidence="1">Cytoplasm</location>
    </subcellularLocation>
</comment>
<comment type="domain">
    <text evidence="1">Consists of three domains; the N-terminal catalytic domain, the editing domain and the C-terminal C-Ala domain. The editing domain removes incorrectly charged amino acids, while the C-Ala domain, along with tRNA(Ala), serves as a bridge to cooperatively bring together the editing and aminoacylation centers thus stimulating deacylation of misacylated tRNAs.</text>
</comment>
<comment type="similarity">
    <text evidence="1">Belongs to the class-II aminoacyl-tRNA synthetase family.</text>
</comment>
<sequence length="881" mass="98153">MERKSSSEIRRMYLDFFKSKGHIIEPSASLVPQDDPTLLWINSGVATMKKYFDGSVVPEVPRLTSSQKSIRTNDIENVGHTARHHTLFEMLGNFSVGDYFKEEAIHWAWELLTSKEWYGMDPEKLYVTVYPKDEEAKKIWLETPIDPSHIVKVEDNFWDIGEGPSGPDSEIFYDRGEAFNNLEDDDPENYPGGENERWLEIWNIVFSQFNHKPDGTYEPLPHKNIDTGMGLERVVSVFQDAPTNFETDLFLPIIHEVEKLSGKKYGENKESDISFKVIADHARAITFAIGDGAIPSNEGRGYVIRRLLRRAVMHGKQLGVNETFLYKMVPVVGEIMKDYYPEVLADQDYIAKVIKSEEDRFSETLTDGLELLNTIIDETKTKGSDTISGFDAFRLFDTYGFPLELAKEYASDKGLKVDEAGFEDEMQKQKERARSARSTEKSMGVQSDLLTDLKTESKYVGYDTLRVDNAILENVIQDGKLTDIVEPGEARVLFNITPFYAEMGGQVADQGEIRDANGEIVAEVIDVQHAPNGQNLHTIKALKKMHSGAAYTLEVNRAFHLKVEKNHTATHLLDQALRDILGDHTQQAGSLVEPGYLRFDFTHFGQVTNEDLDRVEKIINEKIYDEIPVTTVETDLETGKKMGAIALFNDKYGKKVRVVGIGDYSKEFCGGTHVKNTNEIGLFKIVSESGVGAGVRRIEAVTSQAALEFLNTEENLLKQTAGLLKSAQLKDVPTKTEQLQSNVKALTQKISQLEAKIAKSQAANIGDEMVEINGVRLIAADVQVSGMDQLRQMADDWKNKDQSDVLVLAAKIGEKANLIAAVKDDFVKKGLKAGDLIKAIAPKVNGGGGGRPNMAQAGGSNPDNIKAALQAAREWLESQNG</sequence>
<protein>
    <recommendedName>
        <fullName evidence="1">Alanine--tRNA ligase</fullName>
        <ecNumber evidence="1">6.1.1.7</ecNumber>
    </recommendedName>
    <alternativeName>
        <fullName evidence="1">Alanyl-tRNA synthetase</fullName>
        <shortName evidence="1">AlaRS</shortName>
    </alternativeName>
</protein>
<reference key="1">
    <citation type="journal article" date="2006" name="Proc. Natl. Acad. Sci. U.S.A.">
        <title>Comparative genomics of the lactic acid bacteria.</title>
        <authorList>
            <person name="Makarova K.S."/>
            <person name="Slesarev A."/>
            <person name="Wolf Y.I."/>
            <person name="Sorokin A."/>
            <person name="Mirkin B."/>
            <person name="Koonin E.V."/>
            <person name="Pavlov A."/>
            <person name="Pavlova N."/>
            <person name="Karamychev V."/>
            <person name="Polouchine N."/>
            <person name="Shakhova V."/>
            <person name="Grigoriev I."/>
            <person name="Lou Y."/>
            <person name="Rohksar D."/>
            <person name="Lucas S."/>
            <person name="Huang K."/>
            <person name="Goodstein D.M."/>
            <person name="Hawkins T."/>
            <person name="Plengvidhya V."/>
            <person name="Welker D."/>
            <person name="Hughes J."/>
            <person name="Goh Y."/>
            <person name="Benson A."/>
            <person name="Baldwin K."/>
            <person name="Lee J.-H."/>
            <person name="Diaz-Muniz I."/>
            <person name="Dosti B."/>
            <person name="Smeianov V."/>
            <person name="Wechter W."/>
            <person name="Barabote R."/>
            <person name="Lorca G."/>
            <person name="Altermann E."/>
            <person name="Barrangou R."/>
            <person name="Ganesan B."/>
            <person name="Xie Y."/>
            <person name="Rawsthorne H."/>
            <person name="Tamir D."/>
            <person name="Parker C."/>
            <person name="Breidt F."/>
            <person name="Broadbent J.R."/>
            <person name="Hutkins R."/>
            <person name="O'Sullivan D."/>
            <person name="Steele J."/>
            <person name="Unlu G."/>
            <person name="Saier M.H. Jr."/>
            <person name="Klaenhammer T."/>
            <person name="Richardson P."/>
            <person name="Kozyavkin S."/>
            <person name="Weimer B.C."/>
            <person name="Mills D.A."/>
        </authorList>
    </citation>
    <scope>NUCLEOTIDE SEQUENCE [LARGE SCALE GENOMIC DNA]</scope>
    <source>
        <strain>ATCC 25745 / CCUG 21536 / LMG 10740 / 183-1w</strain>
    </source>
</reference>